<accession>Q8NKB8</accession>
<protein>
    <recommendedName>
        <fullName>3-isopropylmalate dehydrogenase</fullName>
        <shortName>3-IPM-DH</shortName>
        <shortName>IMDH</shortName>
        <ecNumber>1.1.1.85</ecNumber>
    </recommendedName>
    <alternativeName>
        <fullName>Beta-IPM dehydrogenase</fullName>
    </alternativeName>
</protein>
<reference key="1">
    <citation type="journal article" date="2003" name="FEMS Yeast Res.">
        <title>The ALEU2 gene -- a new component for an Arxula adeninivorans-based expression platform.</title>
        <authorList>
            <person name="Wartmann T."/>
            <person name="Stoltenburg R."/>
            <person name="Boeer E."/>
            <person name="Sieber H."/>
            <person name="Bartelsen O."/>
            <person name="Gellissen G."/>
            <person name="Kunze G."/>
        </authorList>
    </citation>
    <scope>NUCLEOTIDE SEQUENCE [GENOMIC DNA]</scope>
    <source>
        <strain>LS3</strain>
    </source>
</reference>
<feature type="chain" id="PRO_0000083597" description="3-isopropylmalate dehydrogenase">
    <location>
        <begin position="1"/>
        <end position="362"/>
    </location>
</feature>
<feature type="binding site" evidence="1">
    <location>
        <begin position="77"/>
        <end position="88"/>
    </location>
    <ligand>
        <name>NAD(+)</name>
        <dbReference type="ChEBI" id="CHEBI:57540"/>
    </ligand>
</feature>
<feature type="binding site" evidence="1">
    <location>
        <position position="95"/>
    </location>
    <ligand>
        <name>substrate</name>
    </ligand>
</feature>
<feature type="binding site" evidence="1">
    <location>
        <position position="105"/>
    </location>
    <ligand>
        <name>substrate</name>
    </ligand>
</feature>
<feature type="binding site" evidence="1">
    <location>
        <position position="134"/>
    </location>
    <ligand>
        <name>substrate</name>
    </ligand>
</feature>
<feature type="binding site" evidence="1">
    <location>
        <position position="223"/>
    </location>
    <ligand>
        <name>Mg(2+)</name>
        <dbReference type="ChEBI" id="CHEBI:18420"/>
    </ligand>
</feature>
<feature type="binding site" evidence="1">
    <location>
        <position position="223"/>
    </location>
    <ligand>
        <name>substrate</name>
    </ligand>
</feature>
<feature type="binding site" evidence="1">
    <location>
        <position position="248"/>
    </location>
    <ligand>
        <name>Mg(2+)</name>
        <dbReference type="ChEBI" id="CHEBI:18420"/>
    </ligand>
</feature>
<feature type="binding site" evidence="1">
    <location>
        <position position="252"/>
    </location>
    <ligand>
        <name>Mg(2+)</name>
        <dbReference type="ChEBI" id="CHEBI:18420"/>
    </ligand>
</feature>
<feature type="binding site" evidence="1">
    <location>
        <begin position="287"/>
        <end position="298"/>
    </location>
    <ligand>
        <name>NAD(+)</name>
        <dbReference type="ChEBI" id="CHEBI:57540"/>
    </ligand>
</feature>
<feature type="site" description="Important for catalysis" evidence="1">
    <location>
        <position position="141"/>
    </location>
</feature>
<feature type="site" description="Important for catalysis" evidence="1">
    <location>
        <position position="190"/>
    </location>
</feature>
<name>LEU3_BLAAD</name>
<dbReference type="EC" id="1.1.1.85"/>
<dbReference type="EMBL" id="AJ488496">
    <property type="protein sequence ID" value="CAD32688.1"/>
    <property type="molecule type" value="Genomic_DNA"/>
</dbReference>
<dbReference type="SMR" id="Q8NKB8"/>
<dbReference type="UniPathway" id="UPA00048">
    <property type="reaction ID" value="UER00072"/>
</dbReference>
<dbReference type="GO" id="GO:0005829">
    <property type="term" value="C:cytosol"/>
    <property type="evidence" value="ECO:0007669"/>
    <property type="project" value="TreeGrafter"/>
</dbReference>
<dbReference type="GO" id="GO:0003862">
    <property type="term" value="F:3-isopropylmalate dehydrogenase activity"/>
    <property type="evidence" value="ECO:0007669"/>
    <property type="project" value="UniProtKB-EC"/>
</dbReference>
<dbReference type="GO" id="GO:0000287">
    <property type="term" value="F:magnesium ion binding"/>
    <property type="evidence" value="ECO:0007669"/>
    <property type="project" value="InterPro"/>
</dbReference>
<dbReference type="GO" id="GO:0051287">
    <property type="term" value="F:NAD binding"/>
    <property type="evidence" value="ECO:0007669"/>
    <property type="project" value="InterPro"/>
</dbReference>
<dbReference type="GO" id="GO:0009098">
    <property type="term" value="P:L-leucine biosynthetic process"/>
    <property type="evidence" value="ECO:0007669"/>
    <property type="project" value="UniProtKB-UniPathway"/>
</dbReference>
<dbReference type="FunFam" id="3.40.718.10:FF:000006">
    <property type="entry name" value="3-isopropylmalate dehydrogenase"/>
    <property type="match status" value="1"/>
</dbReference>
<dbReference type="Gene3D" id="3.40.718.10">
    <property type="entry name" value="Isopropylmalate Dehydrogenase"/>
    <property type="match status" value="1"/>
</dbReference>
<dbReference type="InterPro" id="IPR019818">
    <property type="entry name" value="IsoCit/isopropylmalate_DH_CS"/>
</dbReference>
<dbReference type="InterPro" id="IPR024084">
    <property type="entry name" value="IsoPropMal-DH-like_dom"/>
</dbReference>
<dbReference type="InterPro" id="IPR004429">
    <property type="entry name" value="Isopropylmalate_DH"/>
</dbReference>
<dbReference type="NCBIfam" id="TIGR00169">
    <property type="entry name" value="leuB"/>
    <property type="match status" value="1"/>
</dbReference>
<dbReference type="PANTHER" id="PTHR42979">
    <property type="entry name" value="3-ISOPROPYLMALATE DEHYDROGENASE"/>
    <property type="match status" value="1"/>
</dbReference>
<dbReference type="PANTHER" id="PTHR42979:SF1">
    <property type="entry name" value="3-ISOPROPYLMALATE DEHYDROGENASE"/>
    <property type="match status" value="1"/>
</dbReference>
<dbReference type="Pfam" id="PF00180">
    <property type="entry name" value="Iso_dh"/>
    <property type="match status" value="1"/>
</dbReference>
<dbReference type="SMART" id="SM01329">
    <property type="entry name" value="Iso_dh"/>
    <property type="match status" value="1"/>
</dbReference>
<dbReference type="SUPFAM" id="SSF53659">
    <property type="entry name" value="Isocitrate/Isopropylmalate dehydrogenase-like"/>
    <property type="match status" value="1"/>
</dbReference>
<dbReference type="PROSITE" id="PS00470">
    <property type="entry name" value="IDH_IMDH"/>
    <property type="match status" value="1"/>
</dbReference>
<proteinExistence type="inferred from homology"/>
<keyword id="KW-0028">Amino-acid biosynthesis</keyword>
<keyword id="KW-0100">Branched-chain amino acid biosynthesis</keyword>
<keyword id="KW-0963">Cytoplasm</keyword>
<keyword id="KW-0432">Leucine biosynthesis</keyword>
<keyword id="KW-0460">Magnesium</keyword>
<keyword id="KW-0464">Manganese</keyword>
<keyword id="KW-0479">Metal-binding</keyword>
<keyword id="KW-0520">NAD</keyword>
<keyword id="KW-0560">Oxidoreductase</keyword>
<comment type="function">
    <text>Catalyzes the oxidation of 3-carboxy-2-hydroxy-4-methylpentanoate (3-isopropylmalate) to 3-carboxy-4-methyl-2-oxopentanoate. The product decarboxylates to 4-methyl-2 oxopentanoate.</text>
</comment>
<comment type="catalytic activity">
    <reaction>
        <text>(2R,3S)-3-isopropylmalate + NAD(+) = 4-methyl-2-oxopentanoate + CO2 + NADH</text>
        <dbReference type="Rhea" id="RHEA:32271"/>
        <dbReference type="ChEBI" id="CHEBI:16526"/>
        <dbReference type="ChEBI" id="CHEBI:17865"/>
        <dbReference type="ChEBI" id="CHEBI:35121"/>
        <dbReference type="ChEBI" id="CHEBI:57540"/>
        <dbReference type="ChEBI" id="CHEBI:57945"/>
        <dbReference type="EC" id="1.1.1.85"/>
    </reaction>
</comment>
<comment type="cofactor">
    <cofactor evidence="1">
        <name>Mg(2+)</name>
        <dbReference type="ChEBI" id="CHEBI:18420"/>
    </cofactor>
    <cofactor evidence="1">
        <name>Mn(2+)</name>
        <dbReference type="ChEBI" id="CHEBI:29035"/>
    </cofactor>
    <text evidence="1">Binds 1 Mg(2+) or Mn(2+) ion per subunit.</text>
</comment>
<comment type="pathway">
    <text>Amino-acid biosynthesis; L-leucine biosynthesis; L-leucine from 3-methyl-2-oxobutanoate: step 3/4.</text>
</comment>
<comment type="subunit">
    <text evidence="1">Homodimer.</text>
</comment>
<comment type="subcellular location">
    <subcellularLocation>
        <location>Cytoplasm</location>
    </subcellularLocation>
</comment>
<comment type="similarity">
    <text evidence="2">Belongs to the isocitrate and isopropylmalate dehydrogenases family.</text>
</comment>
<evidence type="ECO:0000250" key="1"/>
<evidence type="ECO:0000305" key="2"/>
<organism>
    <name type="scientific">Blastobotrys adeninivorans</name>
    <name type="common">Yeast</name>
    <name type="synonym">Arxula adeninivorans</name>
    <dbReference type="NCBI Taxonomy" id="409370"/>
    <lineage>
        <taxon>Eukaryota</taxon>
        <taxon>Fungi</taxon>
        <taxon>Dikarya</taxon>
        <taxon>Ascomycota</taxon>
        <taxon>Saccharomycotina</taxon>
        <taxon>Dipodascomycetes</taxon>
        <taxon>Dipodascales</taxon>
        <taxon>Trichomonascaceae</taxon>
        <taxon>Blastobotrys</taxon>
    </lineage>
</organism>
<gene>
    <name type="primary">LEU2</name>
</gene>
<sequence length="362" mass="38833">MSKNIIILSGDHVGPEVTAEAIKVLEAITQARPNVKFNFDHKLIGGAAIDATGSPLPDETLEASKKADAVLLGAVGGPKWGTGAVRPEQGLLKIRKELNLYANLRPCNFMSEKLLDLSPLRSEIVKGTNFTVVRELVGGIYFGTRKEDEGNGEAWDTEKYTVEEVKRITRMAAFLALQSNPPLPVWSLDKANVLASSRLWRKTVTETIEKEFPQLTLNHQLIDSAAMILIQNPSKMNGVIVTSNMFGDIISDEASVIPGSLGLLPSASLSSLPDKNTAFGLYEPCHGSAPDLPPNKVNPIATILSAAMMLRLSLNLKEEADAVEKAVSKVIDNGIVTADLKGASSTTEVGDAVAAEVQKLLK</sequence>